<comment type="function">
    <text evidence="6">GTPase involved in the biogenesis of the 60S ribosomal subunit and translational activation of ribosomes. Together with SBDS, triggers the GTP-dependent release of EIF6 from 60S pre-ribosomes in the cytoplasm, thereby activating ribosomes for translation competence by allowing 80S ribosome assembly and facilitating EIF6 recycling to the nucleus, where it is required for 60S rRNA processing and nuclear export.</text>
</comment>
<comment type="catalytic activity">
    <reaction evidence="6">
        <text>GTP + H2O = GDP + phosphate + H(+)</text>
        <dbReference type="Rhea" id="RHEA:19669"/>
        <dbReference type="ChEBI" id="CHEBI:15377"/>
        <dbReference type="ChEBI" id="CHEBI:15378"/>
        <dbReference type="ChEBI" id="CHEBI:37565"/>
        <dbReference type="ChEBI" id="CHEBI:43474"/>
        <dbReference type="ChEBI" id="CHEBI:58189"/>
    </reaction>
    <physiologicalReaction direction="left-to-right" evidence="12">
        <dbReference type="Rhea" id="RHEA:19670"/>
    </physiologicalReaction>
</comment>
<comment type="activity regulation">
    <text evidence="6">GTPase activity is stimulated in the presence of 60S ribosome subunits.</text>
</comment>
<comment type="subunit">
    <text evidence="6 8">Associates with the 60S ribosomal subunit (PubMed:21536732). Found in a complex consisting of the 60S ribosomal subunit, SBDS and EFL1 (PubMed:22814378). Interacts with SBDS and binds to GTP and GDP; the interaction with SBDS decreases EFL1 affinity for GDP and facilitates GDP release (PubMed:25991726).</text>
</comment>
<comment type="interaction">
    <interactant intactId="EBI-2870376">
        <id>Q7Z2Z2</id>
    </interactant>
    <interactant intactId="EBI-1046471">
        <id>Q9Y3A5</id>
        <label>SBDS</label>
    </interactant>
    <organismsDiffer>false</organismsDiffer>
    <experiments>2</experiments>
</comment>
<comment type="alternative products">
    <event type="alternative splicing"/>
    <isoform>
        <id>Q7Z2Z2-1</id>
        <name>1</name>
        <sequence type="displayed"/>
    </isoform>
    <isoform>
        <id>Q7Z2Z2-2</id>
        <name>2</name>
        <sequence type="described" ref="VSP_030152"/>
    </isoform>
</comment>
<comment type="tissue specificity">
    <text evidence="7">Expressed at low levels in brain. Expression is highly increased in glioma tissues.</text>
</comment>
<comment type="disease" evidence="9">
    <disease id="DI-05230">
        <name>Shwachman-Diamond syndrome 2</name>
        <acronym>SDS2</acronym>
        <description>A form of Shwachman-Diamond syndrome, a disorder characterized by hematopoietic abnormalities, exocrine pancreatic dysfunction, and skeletal dysplasia. Intermittent or chronic neutropenia is the most common hematological manifestation, followed by anemia and thrombocytopenia. Some patients progress to bone marrow failure, myelodysplastic syndrome and malignant transformation, with acute myelogenous leukemia being the most common. Exocrine pancreatic dysfunction is generally the first presenting symptom in infancy. Short stature and metaphyseal dysplasia are the most frequent skeletal manifestations. SDS2 inheritance is autosomal recessive.</description>
        <dbReference type="MIM" id="617941"/>
    </disease>
    <text>The disease may be caused by variants affecting the gene represented in this entry.</text>
</comment>
<comment type="similarity">
    <text evidence="2">Belongs to the TRAFAC class translation factor GTPase superfamily. Classic translation factor GTPase family.</text>
</comment>
<comment type="sequence caution" evidence="11">
    <conflict type="erroneous initiation">
        <sequence resource="EMBL-CDS" id="BAB14450"/>
    </conflict>
    <text>Truncated N-terminus.</text>
</comment>
<proteinExistence type="evidence at protein level"/>
<name>EFL1_HUMAN</name>
<organism>
    <name type="scientific">Homo sapiens</name>
    <name type="common">Human</name>
    <dbReference type="NCBI Taxonomy" id="9606"/>
    <lineage>
        <taxon>Eukaryota</taxon>
        <taxon>Metazoa</taxon>
        <taxon>Chordata</taxon>
        <taxon>Craniata</taxon>
        <taxon>Vertebrata</taxon>
        <taxon>Euteleostomi</taxon>
        <taxon>Mammalia</taxon>
        <taxon>Eutheria</taxon>
        <taxon>Euarchontoglires</taxon>
        <taxon>Primates</taxon>
        <taxon>Haplorrhini</taxon>
        <taxon>Catarrhini</taxon>
        <taxon>Hominidae</taxon>
        <taxon>Homo</taxon>
    </lineage>
</organism>
<gene>
    <name evidence="13" type="primary">EFL1</name>
    <name type="synonym">EFTUD1</name>
    <name type="synonym">FAM42A</name>
</gene>
<protein>
    <recommendedName>
        <fullName>Elongation factor-like GTPase 1</fullName>
        <ecNumber evidence="6">3.6.5.-</ecNumber>
    </recommendedName>
    <alternativeName>
        <fullName>Elongation factor Tu GTP-binding domain-containing protein 1</fullName>
    </alternativeName>
    <alternativeName>
        <fullName>Elongation factor-like 1</fullName>
    </alternativeName>
    <alternativeName>
        <fullName>Protein FAM42A</fullName>
    </alternativeName>
</protein>
<sequence length="1120" mass="125430">MVLNSLDKMIQLQKNTANIRNICVLAHVDHGKTTLADCLISSNGIISSRLAGKLRYMDSREDEQIRGITMKSSAISLHYATGNEEYLINLIDSPGHVDFSSEVSTAVRICDGCIIVVDAVEGVCPQTQAVLRQAWLENIRPVLVINKIDRLIVELKFTPQEAYSHLKNILEQINALTGTLFTSKVLEERAERETESQVNPNSEQGEQVYDWSTGLEDTDDSHLYFSPEQGNVVFTSAIDGWGFGIEHFARIYSQKIGIKKEVLMKTLWGDYYINMKAKKIMKGDQAKGKKPLFVQLILENIWSLYDAVLKKDKDKIDKIVTSLGLKIGAREARHSDPKVQINAICSQWLPISHAVLAMVCQKLPSPLDITAERVERLMCTGSQTFDSFPPETQALKAAFMKCGSEDTAPVIIFVSKMFAVDAKALPQNKPRPLTQEEIAQRRERARQRHAEKLAAAQGQAPLEPTQDGSAIETCPKGEEPRGDEQQVESMTPKPVLQEENNQESFIAFARVFSGVARRGKKIFVLGPKYSPLEFLRRVPLGFSAPPDGLPQVPHMAYCALENLYLLMGRELEYLEEVPPGNVLGIGGLQDFVLKSATLCSLPSCPPFIPLNFEATPIVRVAVEPKHPSEMPQLVKGMKLLNQADPCVQILIQETGEHVLVTAGEVHLQRCLDDLKERFAKIHISVSEPIIPFRETITKPPKVDMVNEEIGKQQKVAVIHQMKEDQSKIPEGIQVDSDGLITITTPNKLATLSVRAMPLPEEVTQILEENSDLIRSMEQLTSSLNEGENTHMIHQKTQEKIWEFKGKLEQHLTGRRWRNIVDQIWSFGPRKCGPNILVNKSEDFQNSVWTGPADKASKEASRYRDLGNSIVSGFQLATLSGPMCEEPLMGVCFVLEKWDLSKFEEQGASDLAKEGQEENETCSGGNENQELQDGCSEAFEKRTSQKGESPLTDCYGPFSGQLIATMKEACRYALQVKPQRLMAAMYTCDIMATGDVLGRVYAVLSKREGRVLQEEMKEGTDMFIIKAVLPVAESFGFADEIRKRTSGLASPQLVFSHWEIIPSDPFWVPTTEEEYLHFGEKADSENQARKYMNAVRKRKGLYVEEKIVEHAEKQRTLSKNK</sequence>
<reference key="1">
    <citation type="journal article" date="2004" name="Nat. Genet.">
        <title>Complete sequencing and characterization of 21,243 full-length human cDNAs.</title>
        <authorList>
            <person name="Ota T."/>
            <person name="Suzuki Y."/>
            <person name="Nishikawa T."/>
            <person name="Otsuki T."/>
            <person name="Sugiyama T."/>
            <person name="Irie R."/>
            <person name="Wakamatsu A."/>
            <person name="Hayashi K."/>
            <person name="Sato H."/>
            <person name="Nagai K."/>
            <person name="Kimura K."/>
            <person name="Makita H."/>
            <person name="Sekine M."/>
            <person name="Obayashi M."/>
            <person name="Nishi T."/>
            <person name="Shibahara T."/>
            <person name="Tanaka T."/>
            <person name="Ishii S."/>
            <person name="Yamamoto J."/>
            <person name="Saito K."/>
            <person name="Kawai Y."/>
            <person name="Isono Y."/>
            <person name="Nakamura Y."/>
            <person name="Nagahari K."/>
            <person name="Murakami K."/>
            <person name="Yasuda T."/>
            <person name="Iwayanagi T."/>
            <person name="Wagatsuma M."/>
            <person name="Shiratori A."/>
            <person name="Sudo H."/>
            <person name="Hosoiri T."/>
            <person name="Kaku Y."/>
            <person name="Kodaira H."/>
            <person name="Kondo H."/>
            <person name="Sugawara M."/>
            <person name="Takahashi M."/>
            <person name="Kanda K."/>
            <person name="Yokoi T."/>
            <person name="Furuya T."/>
            <person name="Kikkawa E."/>
            <person name="Omura Y."/>
            <person name="Abe K."/>
            <person name="Kamihara K."/>
            <person name="Katsuta N."/>
            <person name="Sato K."/>
            <person name="Tanikawa M."/>
            <person name="Yamazaki M."/>
            <person name="Ninomiya K."/>
            <person name="Ishibashi T."/>
            <person name="Yamashita H."/>
            <person name="Murakawa K."/>
            <person name="Fujimori K."/>
            <person name="Tanai H."/>
            <person name="Kimata M."/>
            <person name="Watanabe M."/>
            <person name="Hiraoka S."/>
            <person name="Chiba Y."/>
            <person name="Ishida S."/>
            <person name="Ono Y."/>
            <person name="Takiguchi S."/>
            <person name="Watanabe S."/>
            <person name="Yosida M."/>
            <person name="Hotuta T."/>
            <person name="Kusano J."/>
            <person name="Kanehori K."/>
            <person name="Takahashi-Fujii A."/>
            <person name="Hara H."/>
            <person name="Tanase T.-O."/>
            <person name="Nomura Y."/>
            <person name="Togiya S."/>
            <person name="Komai F."/>
            <person name="Hara R."/>
            <person name="Takeuchi K."/>
            <person name="Arita M."/>
            <person name="Imose N."/>
            <person name="Musashino K."/>
            <person name="Yuuki H."/>
            <person name="Oshima A."/>
            <person name="Sasaki N."/>
            <person name="Aotsuka S."/>
            <person name="Yoshikawa Y."/>
            <person name="Matsunawa H."/>
            <person name="Ichihara T."/>
            <person name="Shiohata N."/>
            <person name="Sano S."/>
            <person name="Moriya S."/>
            <person name="Momiyama H."/>
            <person name="Satoh N."/>
            <person name="Takami S."/>
            <person name="Terashima Y."/>
            <person name="Suzuki O."/>
            <person name="Nakagawa S."/>
            <person name="Senoh A."/>
            <person name="Mizoguchi H."/>
            <person name="Goto Y."/>
            <person name="Shimizu F."/>
            <person name="Wakebe H."/>
            <person name="Hishigaki H."/>
            <person name="Watanabe T."/>
            <person name="Sugiyama A."/>
            <person name="Takemoto M."/>
            <person name="Kawakami B."/>
            <person name="Yamazaki M."/>
            <person name="Watanabe K."/>
            <person name="Kumagai A."/>
            <person name="Itakura S."/>
            <person name="Fukuzumi Y."/>
            <person name="Fujimori Y."/>
            <person name="Komiyama M."/>
            <person name="Tashiro H."/>
            <person name="Tanigami A."/>
            <person name="Fujiwara T."/>
            <person name="Ono T."/>
            <person name="Yamada K."/>
            <person name="Fujii Y."/>
            <person name="Ozaki K."/>
            <person name="Hirao M."/>
            <person name="Ohmori Y."/>
            <person name="Kawabata A."/>
            <person name="Hikiji T."/>
            <person name="Kobatake N."/>
            <person name="Inagaki H."/>
            <person name="Ikema Y."/>
            <person name="Okamoto S."/>
            <person name="Okitani R."/>
            <person name="Kawakami T."/>
            <person name="Noguchi S."/>
            <person name="Itoh T."/>
            <person name="Shigeta K."/>
            <person name="Senba T."/>
            <person name="Matsumura K."/>
            <person name="Nakajima Y."/>
            <person name="Mizuno T."/>
            <person name="Morinaga M."/>
            <person name="Sasaki M."/>
            <person name="Togashi T."/>
            <person name="Oyama M."/>
            <person name="Hata H."/>
            <person name="Watanabe M."/>
            <person name="Komatsu T."/>
            <person name="Mizushima-Sugano J."/>
            <person name="Satoh T."/>
            <person name="Shirai Y."/>
            <person name="Takahashi Y."/>
            <person name="Nakagawa K."/>
            <person name="Okumura K."/>
            <person name="Nagase T."/>
            <person name="Nomura N."/>
            <person name="Kikuchi H."/>
            <person name="Masuho Y."/>
            <person name="Yamashita R."/>
            <person name="Nakai K."/>
            <person name="Yada T."/>
            <person name="Nakamura Y."/>
            <person name="Ohara O."/>
            <person name="Isogai T."/>
            <person name="Sugano S."/>
        </authorList>
    </citation>
    <scope>NUCLEOTIDE SEQUENCE [LARGE SCALE MRNA] (ISOFORM 1)</scope>
    <scope>VARIANT ASP-478</scope>
    <source>
        <tissue>Placenta</tissue>
    </source>
</reference>
<reference key="2">
    <citation type="journal article" date="2007" name="BMC Genomics">
        <title>The full-ORF clone resource of the German cDNA consortium.</title>
        <authorList>
            <person name="Bechtel S."/>
            <person name="Rosenfelder H."/>
            <person name="Duda A."/>
            <person name="Schmidt C.P."/>
            <person name="Ernst U."/>
            <person name="Wellenreuther R."/>
            <person name="Mehrle A."/>
            <person name="Schuster C."/>
            <person name="Bahr A."/>
            <person name="Bloecker H."/>
            <person name="Heubner D."/>
            <person name="Hoerlein A."/>
            <person name="Michel G."/>
            <person name="Wedler H."/>
            <person name="Koehrer K."/>
            <person name="Ottenwaelder B."/>
            <person name="Poustka A."/>
            <person name="Wiemann S."/>
            <person name="Schupp I."/>
        </authorList>
    </citation>
    <scope>NUCLEOTIDE SEQUENCE [LARGE SCALE MRNA] (ISOFORM 2)</scope>
    <scope>VARIANT ASP-478</scope>
    <source>
        <tissue>Fetal brain</tissue>
    </source>
</reference>
<reference key="3">
    <citation type="journal article" date="2006" name="Nature">
        <title>Analysis of the DNA sequence and duplication history of human chromosome 15.</title>
        <authorList>
            <person name="Zody M.C."/>
            <person name="Garber M."/>
            <person name="Sharpe T."/>
            <person name="Young S.K."/>
            <person name="Rowen L."/>
            <person name="O'Neill K."/>
            <person name="Whittaker C.A."/>
            <person name="Kamal M."/>
            <person name="Chang J.L."/>
            <person name="Cuomo C.A."/>
            <person name="Dewar K."/>
            <person name="FitzGerald M.G."/>
            <person name="Kodira C.D."/>
            <person name="Madan A."/>
            <person name="Qin S."/>
            <person name="Yang X."/>
            <person name="Abbasi N."/>
            <person name="Abouelleil A."/>
            <person name="Arachchi H.M."/>
            <person name="Baradarani L."/>
            <person name="Birditt B."/>
            <person name="Bloom S."/>
            <person name="Bloom T."/>
            <person name="Borowsky M.L."/>
            <person name="Burke J."/>
            <person name="Butler J."/>
            <person name="Cook A."/>
            <person name="DeArellano K."/>
            <person name="DeCaprio D."/>
            <person name="Dorris L. III"/>
            <person name="Dors M."/>
            <person name="Eichler E.E."/>
            <person name="Engels R."/>
            <person name="Fahey J."/>
            <person name="Fleetwood P."/>
            <person name="Friedman C."/>
            <person name="Gearin G."/>
            <person name="Hall J.L."/>
            <person name="Hensley G."/>
            <person name="Johnson E."/>
            <person name="Jones C."/>
            <person name="Kamat A."/>
            <person name="Kaur A."/>
            <person name="Locke D.P."/>
            <person name="Madan A."/>
            <person name="Munson G."/>
            <person name="Jaffe D.B."/>
            <person name="Lui A."/>
            <person name="Macdonald P."/>
            <person name="Mauceli E."/>
            <person name="Naylor J.W."/>
            <person name="Nesbitt R."/>
            <person name="Nicol R."/>
            <person name="O'Leary S.B."/>
            <person name="Ratcliffe A."/>
            <person name="Rounsley S."/>
            <person name="She X."/>
            <person name="Sneddon K.M.B."/>
            <person name="Stewart S."/>
            <person name="Sougnez C."/>
            <person name="Stone S.M."/>
            <person name="Topham K."/>
            <person name="Vincent D."/>
            <person name="Wang S."/>
            <person name="Zimmer A.R."/>
            <person name="Birren B.W."/>
            <person name="Hood L."/>
            <person name="Lander E.S."/>
            <person name="Nusbaum C."/>
        </authorList>
    </citation>
    <scope>NUCLEOTIDE SEQUENCE [LARGE SCALE GENOMIC DNA]</scope>
</reference>
<reference key="4">
    <citation type="journal article" date="2009" name="Science">
        <title>Lysine acetylation targets protein complexes and co-regulates major cellular functions.</title>
        <authorList>
            <person name="Choudhary C."/>
            <person name="Kumar C."/>
            <person name="Gnad F."/>
            <person name="Nielsen M.L."/>
            <person name="Rehman M."/>
            <person name="Walther T.C."/>
            <person name="Olsen J.V."/>
            <person name="Mann M."/>
        </authorList>
    </citation>
    <scope>ACETYLATION [LARGE SCALE ANALYSIS] AT LYS-528</scope>
    <scope>IDENTIFICATION BY MASS SPECTROMETRY [LARGE SCALE ANALYSIS]</scope>
</reference>
<reference key="5">
    <citation type="journal article" date="2011" name="BMC Syst. Biol.">
        <title>Initial characterization of the human central proteome.</title>
        <authorList>
            <person name="Burkard T.R."/>
            <person name="Planyavsky M."/>
            <person name="Kaupe I."/>
            <person name="Breitwieser F.P."/>
            <person name="Buerckstuemmer T."/>
            <person name="Bennett K.L."/>
            <person name="Superti-Furga G."/>
            <person name="Colinge J."/>
        </authorList>
    </citation>
    <scope>IDENTIFICATION BY MASS SPECTROMETRY [LARGE SCALE ANALYSIS]</scope>
</reference>
<reference key="6">
    <citation type="journal article" date="2011" name="Genes Dev.">
        <title>Uncoupling of GTP hydrolysis from eIF6 release on the ribosome causes Shwachman-Diamond syndrome.</title>
        <authorList>
            <person name="Finch A.J."/>
            <person name="Hilcenko C."/>
            <person name="Basse N."/>
            <person name="Drynan L.F."/>
            <person name="Goyenechea B."/>
            <person name="Menne T.F."/>
            <person name="Gonzalez Fernandez A."/>
            <person name="Simpson P."/>
            <person name="D'Santos C.S."/>
            <person name="Arends M.J."/>
            <person name="Donadieu J."/>
            <person name="Bellanne-Chantelot C."/>
            <person name="Costanzo M."/>
            <person name="Boone C."/>
            <person name="McKenzie A.N."/>
            <person name="Freund S.M."/>
            <person name="Warren A.J."/>
        </authorList>
    </citation>
    <scope>FUNCTION</scope>
    <scope>CATALYTIC ACTIVITY</scope>
    <scope>ACTIVITY REGULATION</scope>
    <scope>SUBUNIT</scope>
    <scope>MUTAGENESIS OF THR-33 AND HIS-96</scope>
</reference>
<reference key="7">
    <citation type="journal article" date="2012" name="Proc. Natl. Acad. Sci. U.S.A.">
        <title>N-terminal acetylome analyses and functional insights of the N-terminal acetyltransferase NatB.</title>
        <authorList>
            <person name="Van Damme P."/>
            <person name="Lasa M."/>
            <person name="Polevoda B."/>
            <person name="Gazquez C."/>
            <person name="Elosegui-Artola A."/>
            <person name="Kim D.S."/>
            <person name="De Juan-Pardo E."/>
            <person name="Demeyer K."/>
            <person name="Hole K."/>
            <person name="Larrea E."/>
            <person name="Timmerman E."/>
            <person name="Prieto J."/>
            <person name="Arnesen T."/>
            <person name="Sherman F."/>
            <person name="Gevaert K."/>
            <person name="Aldabe R."/>
        </authorList>
    </citation>
    <scope>IDENTIFICATION BY MASS SPECTROMETRY [LARGE SCALE ANALYSIS]</scope>
</reference>
<reference key="8">
    <citation type="journal article" date="2014" name="Neuro-oncol.">
        <title>Functional analysis of a novel glioma antigen, EFTUD1.</title>
        <authorList>
            <person name="Saito K."/>
            <person name="Iizuka Y."/>
            <person name="Ohta S."/>
            <person name="Takahashi S."/>
            <person name="Nakamura K."/>
            <person name="Saya H."/>
            <person name="Yoshida K."/>
            <person name="Kawakami Y."/>
            <person name="Toda M."/>
        </authorList>
    </citation>
    <scope>TISSUE SPECIFICITY</scope>
</reference>
<reference key="9">
    <citation type="journal article" date="2015" name="J. Biol. Chem.">
        <title>Defective guanine nucleotide exchange in the elongation factor-like 1 (EFL1) GTPase by mutations in the Shwachman-Diamond syndrome protein.</title>
        <authorList>
            <person name="Garcia-Marquez A."/>
            <person name="Gijsbers A."/>
            <person name="de la Mora E."/>
            <person name="Sanchez-Puig N."/>
        </authorList>
    </citation>
    <scope>INTERACTION WITH SBDS; GTP AND GDP</scope>
</reference>
<reference key="10">
    <citation type="journal article" date="2015" name="Nat. Struct. Mol. Biol.">
        <title>Mechanism of eIF6 release from the nascent 60S ribosomal subunit.</title>
        <authorList>
            <person name="Weis F."/>
            <person name="Giudice E."/>
            <person name="Churcher M."/>
            <person name="Jin L."/>
            <person name="Hilcenko C."/>
            <person name="Wong C.C."/>
            <person name="Traynor D."/>
            <person name="Kay R.R."/>
            <person name="Warren A.J."/>
        </authorList>
    </citation>
    <scope>STRUCTURE BY ELECTRON MICROSCOPY (4.10 ANGSTROMS)</scope>
    <scope>IDENTIFICATION IN A COMPLEX WITH SBDS; 60S RIBOSOMAL SUBUNIT AND EFL1</scope>
</reference>
<reference key="11">
    <citation type="journal article" date="2017" name="J. Med. Genet.">
        <title>Mutations in EFL1, an SBDS partner, are associated with infantile pancytopenia, exocrine pancreatic insufficiency and skeletal anomalies in a Shwachman-Diamond like syndrome.</title>
        <authorList>
            <person name="Stepensky P."/>
            <person name="Chacon-Flores M."/>
            <person name="Kim K.H."/>
            <person name="Abuzaitoun O."/>
            <person name="Bautista-Santos A."/>
            <person name="Simanovsky N."/>
            <person name="Siliqi D."/>
            <person name="Altamura D."/>
            <person name="Mendez-Godoy A."/>
            <person name="Gijsbers A."/>
            <person name="Naser Eddin A."/>
            <person name="Dor T."/>
            <person name="Charrow J."/>
            <person name="Sanchez-Puig N."/>
            <person name="Elpeleg O."/>
        </authorList>
    </citation>
    <scope>INVOLVEMENT IN SDS2</scope>
    <scope>VARIANTS SDS2 LYS-882 AND GLN-1095</scope>
</reference>
<evidence type="ECO:0000250" key="1"/>
<evidence type="ECO:0000255" key="2">
    <source>
        <dbReference type="PROSITE-ProRule" id="PRU01059"/>
    </source>
</evidence>
<evidence type="ECO:0000256" key="3">
    <source>
        <dbReference type="SAM" id="MobiDB-lite"/>
    </source>
</evidence>
<evidence type="ECO:0000269" key="4">
    <source>
    </source>
</evidence>
<evidence type="ECO:0000269" key="5">
    <source>
    </source>
</evidence>
<evidence type="ECO:0000269" key="6">
    <source>
    </source>
</evidence>
<evidence type="ECO:0000269" key="7">
    <source>
    </source>
</evidence>
<evidence type="ECO:0000269" key="8">
    <source>
    </source>
</evidence>
<evidence type="ECO:0000269" key="9">
    <source>
    </source>
</evidence>
<evidence type="ECO:0000303" key="10">
    <source>
    </source>
</evidence>
<evidence type="ECO:0000305" key="11"/>
<evidence type="ECO:0000305" key="12">
    <source>
    </source>
</evidence>
<evidence type="ECO:0000312" key="13">
    <source>
        <dbReference type="HGNC" id="HGNC:25789"/>
    </source>
</evidence>
<evidence type="ECO:0007744" key="14">
    <source>
    </source>
</evidence>
<feature type="chain" id="PRO_0000313805" description="Elongation factor-like GTPase 1">
    <location>
        <begin position="1"/>
        <end position="1120"/>
    </location>
</feature>
<feature type="domain" description="tr-type G" evidence="2">
    <location>
        <begin position="17"/>
        <end position="272"/>
    </location>
</feature>
<feature type="region of interest" description="Disordered" evidence="3">
    <location>
        <begin position="430"/>
        <end position="496"/>
    </location>
</feature>
<feature type="region of interest" description="Disordered" evidence="3">
    <location>
        <begin position="907"/>
        <end position="930"/>
    </location>
</feature>
<feature type="compositionally biased region" description="Basic and acidic residues" evidence="3">
    <location>
        <begin position="438"/>
        <end position="452"/>
    </location>
</feature>
<feature type="compositionally biased region" description="Basic and acidic residues" evidence="3">
    <location>
        <begin position="475"/>
        <end position="484"/>
    </location>
</feature>
<feature type="compositionally biased region" description="Polar residues" evidence="3">
    <location>
        <begin position="920"/>
        <end position="930"/>
    </location>
</feature>
<feature type="binding site" evidence="1">
    <location>
        <begin position="26"/>
        <end position="33"/>
    </location>
    <ligand>
        <name>GTP</name>
        <dbReference type="ChEBI" id="CHEBI:37565"/>
    </ligand>
</feature>
<feature type="binding site" evidence="1">
    <location>
        <begin position="92"/>
        <end position="96"/>
    </location>
    <ligand>
        <name>GTP</name>
        <dbReference type="ChEBI" id="CHEBI:37565"/>
    </ligand>
</feature>
<feature type="binding site" evidence="1">
    <location>
        <begin position="146"/>
        <end position="149"/>
    </location>
    <ligand>
        <name>GTP</name>
        <dbReference type="ChEBI" id="CHEBI:37565"/>
    </ligand>
</feature>
<feature type="modified residue" description="N6-acetyllysine" evidence="14">
    <location>
        <position position="528"/>
    </location>
</feature>
<feature type="splice variant" id="VSP_030152" description="In isoform 2." evidence="10">
    <location>
        <begin position="32"/>
        <end position="82"/>
    </location>
</feature>
<feature type="sequence variant" id="VAR_037746" description="In dbSNP:rs2292189." evidence="4 5">
    <original>E</original>
    <variation>D</variation>
    <location>
        <position position="478"/>
    </location>
</feature>
<feature type="sequence variant" id="VAR_037747" description="In dbSNP:rs1128431.">
    <original>I</original>
    <variation>V</variation>
    <location>
        <position position="617"/>
    </location>
</feature>
<feature type="sequence variant" id="VAR_037748" description="In dbSNP:rs2292071.">
    <original>K</original>
    <variation>R</variation>
    <location>
        <position position="711"/>
    </location>
</feature>
<feature type="sequence variant" id="VAR_080513" description="In SDS2; uncertain significance; dbSNP:rs1316615934." evidence="9">
    <original>M</original>
    <variation>K</variation>
    <location>
        <position position="882"/>
    </location>
</feature>
<feature type="sequence variant" id="VAR_080514" description="In SDS2; uncertain significance; dbSNP:rs376095522." evidence="9">
    <original>R</original>
    <variation>Q</variation>
    <location>
        <position position="1095"/>
    </location>
</feature>
<feature type="mutagenesis site" description="Loss of GTPase activity. Abolishes dissociation of EIF6 from 60S pre-ribosome subunits." evidence="6">
    <original>T</original>
    <variation>A</variation>
    <location>
        <position position="33"/>
    </location>
</feature>
<feature type="mutagenesis site" description="Loss of GTPase activity. Abolishes dissociation of EIF6 from 60S pre-ribosome subunits." evidence="6">
    <original>H</original>
    <variation>A</variation>
    <location>
        <position position="96"/>
    </location>
</feature>
<feature type="sequence conflict" description="In Ref. 2; CAD98101." evidence="11" ref="2">
    <original>A</original>
    <variation>V</variation>
    <location>
        <position position="456"/>
    </location>
</feature>
<feature type="sequence conflict" description="In Ref. 1; BAB14450." evidence="11" ref="1">
    <original>Q</original>
    <variation>R</variation>
    <location>
        <position position="632"/>
    </location>
</feature>
<feature type="sequence conflict" description="In Ref. 2; CAD98101." evidence="11" ref="2">
    <original>I</original>
    <variation>T</variation>
    <location>
        <position position="696"/>
    </location>
</feature>
<accession>Q7Z2Z2</accession>
<accession>A6NKY5</accession>
<accession>B7Z6I0</accession>
<accession>Q9H8Z6</accession>
<dbReference type="EC" id="3.6.5.-" evidence="6"/>
<dbReference type="EMBL" id="AK023181">
    <property type="protein sequence ID" value="BAB14450.1"/>
    <property type="status" value="ALT_INIT"/>
    <property type="molecule type" value="mRNA"/>
</dbReference>
<dbReference type="EMBL" id="AK300348">
    <property type="protein sequence ID" value="BAH13266.1"/>
    <property type="molecule type" value="mRNA"/>
</dbReference>
<dbReference type="EMBL" id="BX538332">
    <property type="protein sequence ID" value="CAD98101.1"/>
    <property type="molecule type" value="mRNA"/>
</dbReference>
<dbReference type="EMBL" id="AC026624">
    <property type="status" value="NOT_ANNOTATED_CDS"/>
    <property type="molecule type" value="Genomic_DNA"/>
</dbReference>
<dbReference type="EMBL" id="AC026956">
    <property type="status" value="NOT_ANNOTATED_CDS"/>
    <property type="molecule type" value="Genomic_DNA"/>
</dbReference>
<dbReference type="CCDS" id="CCDS42070.1">
    <molecule id="Q7Z2Z2-2"/>
</dbReference>
<dbReference type="CCDS" id="CCDS42071.1">
    <molecule id="Q7Z2Z2-1"/>
</dbReference>
<dbReference type="RefSeq" id="NP_001035700.1">
    <molecule id="Q7Z2Z2-2"/>
    <property type="nucleotide sequence ID" value="NM_001040610.3"/>
</dbReference>
<dbReference type="RefSeq" id="NP_001309774.1">
    <molecule id="Q7Z2Z2-1"/>
    <property type="nucleotide sequence ID" value="NM_001322845.2"/>
</dbReference>
<dbReference type="RefSeq" id="NP_078856.4">
    <molecule id="Q7Z2Z2-1"/>
    <property type="nucleotide sequence ID" value="NM_024580.5"/>
</dbReference>
<dbReference type="PDB" id="5ANB">
    <property type="method" value="EM"/>
    <property type="resolution" value="4.10 A"/>
    <property type="chains" value="K=1-1120"/>
</dbReference>
<dbReference type="PDB" id="5ANC">
    <property type="method" value="EM"/>
    <property type="resolution" value="4.20 A"/>
    <property type="chains" value="K=1-1120"/>
</dbReference>
<dbReference type="PDBsum" id="5ANB"/>
<dbReference type="PDBsum" id="5ANC"/>
<dbReference type="EMDB" id="EMD-3146"/>
<dbReference type="EMDB" id="EMD-3147"/>
<dbReference type="SMR" id="Q7Z2Z2"/>
<dbReference type="BioGRID" id="122761">
    <property type="interactions" value="80"/>
</dbReference>
<dbReference type="FunCoup" id="Q7Z2Z2">
    <property type="interactions" value="1812"/>
</dbReference>
<dbReference type="IntAct" id="Q7Z2Z2">
    <property type="interactions" value="23"/>
</dbReference>
<dbReference type="MINT" id="Q7Z2Z2"/>
<dbReference type="STRING" id="9606.ENSP00000268206"/>
<dbReference type="DrugBank" id="DB03619">
    <property type="generic name" value="Deoxycholic acid"/>
</dbReference>
<dbReference type="DrugBank" id="DB04315">
    <property type="generic name" value="Guanosine-5'-Diphosphate"/>
</dbReference>
<dbReference type="DrugBank" id="DB02750">
    <property type="generic name" value="S-(Methylmercury)-L-Cysteine"/>
</dbReference>
<dbReference type="GlyGen" id="Q7Z2Z2">
    <property type="glycosylation" value="2 sites, 1 O-linked glycan (2 sites)"/>
</dbReference>
<dbReference type="iPTMnet" id="Q7Z2Z2"/>
<dbReference type="MetOSite" id="Q7Z2Z2"/>
<dbReference type="PhosphoSitePlus" id="Q7Z2Z2"/>
<dbReference type="SwissPalm" id="Q7Z2Z2"/>
<dbReference type="BioMuta" id="EFL1"/>
<dbReference type="DMDM" id="166232397"/>
<dbReference type="jPOST" id="Q7Z2Z2"/>
<dbReference type="MassIVE" id="Q7Z2Z2"/>
<dbReference type="PaxDb" id="9606-ENSP00000268206"/>
<dbReference type="PeptideAtlas" id="Q7Z2Z2"/>
<dbReference type="ProteomicsDB" id="68991">
    <molecule id="Q7Z2Z2-1"/>
</dbReference>
<dbReference type="ProteomicsDB" id="68992">
    <molecule id="Q7Z2Z2-2"/>
</dbReference>
<dbReference type="Pumba" id="Q7Z2Z2"/>
<dbReference type="Antibodypedia" id="55408">
    <property type="antibodies" value="90 antibodies from 17 providers"/>
</dbReference>
<dbReference type="DNASU" id="79631"/>
<dbReference type="Ensembl" id="ENST00000268206.12">
    <molecule id="Q7Z2Z2-1"/>
    <property type="protein sequence ID" value="ENSP00000268206.7"/>
    <property type="gene ID" value="ENSG00000140598.16"/>
</dbReference>
<dbReference type="Ensembl" id="ENST00000359445.8">
    <molecule id="Q7Z2Z2-2"/>
    <property type="protein sequence ID" value="ENSP00000352418.3"/>
    <property type="gene ID" value="ENSG00000140598.16"/>
</dbReference>
<dbReference type="Ensembl" id="ENST00000696330.1">
    <molecule id="Q7Z2Z2-1"/>
    <property type="protein sequence ID" value="ENSP00000512564.1"/>
    <property type="gene ID" value="ENSG00000140598.16"/>
</dbReference>
<dbReference type="GeneID" id="79631"/>
<dbReference type="KEGG" id="hsa:79631"/>
<dbReference type="MANE-Select" id="ENST00000268206.12">
    <property type="protein sequence ID" value="ENSP00000268206.7"/>
    <property type="RefSeq nucleotide sequence ID" value="NM_024580.6"/>
    <property type="RefSeq protein sequence ID" value="NP_078856.4"/>
</dbReference>
<dbReference type="UCSC" id="uc002bgt.2">
    <molecule id="Q7Z2Z2-1"/>
    <property type="organism name" value="human"/>
</dbReference>
<dbReference type="AGR" id="HGNC:25789"/>
<dbReference type="CTD" id="79631"/>
<dbReference type="DisGeNET" id="79631"/>
<dbReference type="GeneCards" id="EFL1"/>
<dbReference type="HGNC" id="HGNC:25789">
    <property type="gene designation" value="EFL1"/>
</dbReference>
<dbReference type="HPA" id="ENSG00000140598">
    <property type="expression patterns" value="Low tissue specificity"/>
</dbReference>
<dbReference type="MalaCards" id="EFL1"/>
<dbReference type="MIM" id="617538">
    <property type="type" value="gene"/>
</dbReference>
<dbReference type="MIM" id="617941">
    <property type="type" value="phenotype"/>
</dbReference>
<dbReference type="neXtProt" id="NX_Q7Z2Z2"/>
<dbReference type="OpenTargets" id="ENSG00000140598"/>
<dbReference type="Orphanet" id="811">
    <property type="disease" value="Shwachman-Diamond syndrome"/>
</dbReference>
<dbReference type="PharmGKB" id="PA134902221"/>
<dbReference type="VEuPathDB" id="HostDB:ENSG00000140598"/>
<dbReference type="eggNOG" id="KOG0467">
    <property type="taxonomic scope" value="Eukaryota"/>
</dbReference>
<dbReference type="GeneTree" id="ENSGT00550000074806"/>
<dbReference type="HOGENOM" id="CLU_002794_3_1_1"/>
<dbReference type="InParanoid" id="Q7Z2Z2"/>
<dbReference type="OMA" id="FARCDIQ"/>
<dbReference type="OrthoDB" id="364892at2759"/>
<dbReference type="PAN-GO" id="Q7Z2Z2">
    <property type="GO annotations" value="5 GO annotations based on evolutionary models"/>
</dbReference>
<dbReference type="PhylomeDB" id="Q7Z2Z2"/>
<dbReference type="TreeFam" id="TF105909"/>
<dbReference type="BRENDA" id="3.6.5.3">
    <property type="organism ID" value="2681"/>
</dbReference>
<dbReference type="PathwayCommons" id="Q7Z2Z2"/>
<dbReference type="SignaLink" id="Q7Z2Z2"/>
<dbReference type="SIGNOR" id="Q7Z2Z2"/>
<dbReference type="BioGRID-ORCS" id="79631">
    <property type="hits" value="711 hits in 1132 CRISPR screens"/>
</dbReference>
<dbReference type="ChiTaRS" id="EFL1">
    <property type="organism name" value="human"/>
</dbReference>
<dbReference type="EvolutionaryTrace" id="Q7Z2Z2"/>
<dbReference type="GenomeRNAi" id="79631"/>
<dbReference type="Pharos" id="Q7Z2Z2">
    <property type="development level" value="Tbio"/>
</dbReference>
<dbReference type="PRO" id="PR:Q7Z2Z2"/>
<dbReference type="Proteomes" id="UP000005640">
    <property type="component" value="Chromosome 15"/>
</dbReference>
<dbReference type="RNAct" id="Q7Z2Z2">
    <property type="molecule type" value="protein"/>
</dbReference>
<dbReference type="Bgee" id="ENSG00000140598">
    <property type="expression patterns" value="Expressed in secondary oocyte and 165 other cell types or tissues"/>
</dbReference>
<dbReference type="ExpressionAtlas" id="Q7Z2Z2">
    <property type="expression patterns" value="baseline and differential"/>
</dbReference>
<dbReference type="GO" id="GO:0005829">
    <property type="term" value="C:cytosol"/>
    <property type="evidence" value="ECO:0000318"/>
    <property type="project" value="GO_Central"/>
</dbReference>
<dbReference type="GO" id="GO:1990904">
    <property type="term" value="C:ribonucleoprotein complex"/>
    <property type="evidence" value="ECO:0000318"/>
    <property type="project" value="GO_Central"/>
</dbReference>
<dbReference type="GO" id="GO:0005525">
    <property type="term" value="F:GTP binding"/>
    <property type="evidence" value="ECO:0007669"/>
    <property type="project" value="UniProtKB-KW"/>
</dbReference>
<dbReference type="GO" id="GO:0003924">
    <property type="term" value="F:GTPase activity"/>
    <property type="evidence" value="ECO:0000314"/>
    <property type="project" value="UniProtKB"/>
</dbReference>
<dbReference type="GO" id="GO:0043022">
    <property type="term" value="F:ribosome binding"/>
    <property type="evidence" value="ECO:0000315"/>
    <property type="project" value="UniProtKB"/>
</dbReference>
<dbReference type="GO" id="GO:0003746">
    <property type="term" value="F:translation elongation factor activity"/>
    <property type="evidence" value="ECO:0007669"/>
    <property type="project" value="UniProtKB-KW"/>
</dbReference>
<dbReference type="GO" id="GO:0042256">
    <property type="term" value="P:cytosolic ribosome assembly"/>
    <property type="evidence" value="ECO:0000315"/>
    <property type="project" value="UniProtKB"/>
</dbReference>
<dbReference type="GO" id="GO:0046039">
    <property type="term" value="P:GTP metabolic process"/>
    <property type="evidence" value="ECO:0000314"/>
    <property type="project" value="UniProtKB"/>
</dbReference>
<dbReference type="CDD" id="cd01681">
    <property type="entry name" value="aeEF2_snRNP_like_IV"/>
    <property type="match status" value="1"/>
</dbReference>
<dbReference type="CDD" id="cd04096">
    <property type="entry name" value="eEF2_snRNP_like_C"/>
    <property type="match status" value="1"/>
</dbReference>
<dbReference type="CDD" id="cd01885">
    <property type="entry name" value="EF2"/>
    <property type="match status" value="1"/>
</dbReference>
<dbReference type="CDD" id="cd16268">
    <property type="entry name" value="EF2_II"/>
    <property type="match status" value="1"/>
</dbReference>
<dbReference type="CDD" id="cd16261">
    <property type="entry name" value="EF2_snRNP_III"/>
    <property type="match status" value="1"/>
</dbReference>
<dbReference type="FunFam" id="3.30.70.240:FF:000006">
    <property type="entry name" value="Elongation factor like GTPase 1"/>
    <property type="match status" value="1"/>
</dbReference>
<dbReference type="FunFam" id="3.40.50.300:FF:000732">
    <property type="entry name" value="Elongation factor like GTPase 1"/>
    <property type="match status" value="1"/>
</dbReference>
<dbReference type="FunFam" id="3.90.1430.10:FF:000002">
    <property type="entry name" value="Elongation factor like GTPase 1"/>
    <property type="match status" value="1"/>
</dbReference>
<dbReference type="FunFam" id="2.40.30.10:FF:000066">
    <property type="entry name" value="Elongation factor Tu GTP-binding domain-containing protein 1"/>
    <property type="match status" value="1"/>
</dbReference>
<dbReference type="FunFam" id="3.30.230.10:FF:000044">
    <property type="entry name" value="elongation factor-like GTPase 1 isoform X1"/>
    <property type="match status" value="1"/>
</dbReference>
<dbReference type="FunFam" id="3.30.70.870:FF:000002">
    <property type="entry name" value="Translation elongation factor 2"/>
    <property type="match status" value="1"/>
</dbReference>
<dbReference type="Gene3D" id="3.30.230.10">
    <property type="match status" value="1"/>
</dbReference>
<dbReference type="Gene3D" id="3.30.70.240">
    <property type="match status" value="1"/>
</dbReference>
<dbReference type="Gene3D" id="3.30.70.870">
    <property type="entry name" value="Elongation Factor G (Translational Gtpase), domain 3"/>
    <property type="match status" value="1"/>
</dbReference>
<dbReference type="Gene3D" id="3.40.50.300">
    <property type="entry name" value="P-loop containing nucleotide triphosphate hydrolases"/>
    <property type="match status" value="1"/>
</dbReference>
<dbReference type="Gene3D" id="2.40.30.10">
    <property type="entry name" value="Translation factors"/>
    <property type="match status" value="1"/>
</dbReference>
<dbReference type="Gene3D" id="3.90.1430.10">
    <property type="entry name" value="Yeast translation eEF2 (G' domain)"/>
    <property type="match status" value="1"/>
</dbReference>
<dbReference type="InterPro" id="IPR041095">
    <property type="entry name" value="EFG_II"/>
</dbReference>
<dbReference type="InterPro" id="IPR035647">
    <property type="entry name" value="EFG_III/V"/>
</dbReference>
<dbReference type="InterPro" id="IPR000640">
    <property type="entry name" value="EFG_V-like"/>
</dbReference>
<dbReference type="InterPro" id="IPR056752">
    <property type="entry name" value="EFL1"/>
</dbReference>
<dbReference type="InterPro" id="IPR027417">
    <property type="entry name" value="P-loop_NTPase"/>
</dbReference>
<dbReference type="InterPro" id="IPR020568">
    <property type="entry name" value="Ribosomal_Su5_D2-typ_SF"/>
</dbReference>
<dbReference type="InterPro" id="IPR014721">
    <property type="entry name" value="Ribsml_uS5_D2-typ_fold_subgr"/>
</dbReference>
<dbReference type="InterPro" id="IPR005225">
    <property type="entry name" value="Small_GTP-bd"/>
</dbReference>
<dbReference type="InterPro" id="IPR000795">
    <property type="entry name" value="T_Tr_GTP-bd_dom"/>
</dbReference>
<dbReference type="InterPro" id="IPR009000">
    <property type="entry name" value="Transl_B-barrel_sf"/>
</dbReference>
<dbReference type="NCBIfam" id="TIGR00231">
    <property type="entry name" value="small_GTP"/>
    <property type="match status" value="1"/>
</dbReference>
<dbReference type="PANTHER" id="PTHR42908:SF3">
    <property type="entry name" value="ELONGATION FACTOR-LIKE GTPASE 1"/>
    <property type="match status" value="1"/>
</dbReference>
<dbReference type="PANTHER" id="PTHR42908">
    <property type="entry name" value="TRANSLATION ELONGATION FACTOR-RELATED"/>
    <property type="match status" value="1"/>
</dbReference>
<dbReference type="Pfam" id="PF00679">
    <property type="entry name" value="EFG_C"/>
    <property type="match status" value="1"/>
</dbReference>
<dbReference type="Pfam" id="PF14492">
    <property type="entry name" value="EFG_III"/>
    <property type="match status" value="1"/>
</dbReference>
<dbReference type="Pfam" id="PF25118">
    <property type="entry name" value="EFL1"/>
    <property type="match status" value="1"/>
</dbReference>
<dbReference type="Pfam" id="PF00009">
    <property type="entry name" value="GTP_EFTU"/>
    <property type="match status" value="1"/>
</dbReference>
<dbReference type="PRINTS" id="PR00315">
    <property type="entry name" value="ELONGATNFCT"/>
</dbReference>
<dbReference type="SMART" id="SM00838">
    <property type="entry name" value="EFG_C"/>
    <property type="match status" value="1"/>
</dbReference>
<dbReference type="SUPFAM" id="SSF54980">
    <property type="entry name" value="EF-G C-terminal domain-like"/>
    <property type="match status" value="2"/>
</dbReference>
<dbReference type="SUPFAM" id="SSF52540">
    <property type="entry name" value="P-loop containing nucleoside triphosphate hydrolases"/>
    <property type="match status" value="1"/>
</dbReference>
<dbReference type="SUPFAM" id="SSF54211">
    <property type="entry name" value="Ribosomal protein S5 domain 2-like"/>
    <property type="match status" value="1"/>
</dbReference>
<dbReference type="SUPFAM" id="SSF50447">
    <property type="entry name" value="Translation proteins"/>
    <property type="match status" value="1"/>
</dbReference>
<dbReference type="PROSITE" id="PS51722">
    <property type="entry name" value="G_TR_2"/>
    <property type="match status" value="1"/>
</dbReference>
<keyword id="KW-0002">3D-structure</keyword>
<keyword id="KW-0007">Acetylation</keyword>
<keyword id="KW-0025">Alternative splicing</keyword>
<keyword id="KW-0225">Disease variant</keyword>
<keyword id="KW-0251">Elongation factor</keyword>
<keyword id="KW-0342">GTP-binding</keyword>
<keyword id="KW-0378">Hydrolase</keyword>
<keyword id="KW-0547">Nucleotide-binding</keyword>
<keyword id="KW-0648">Protein biosynthesis</keyword>
<keyword id="KW-1267">Proteomics identification</keyword>
<keyword id="KW-1185">Reference proteome</keyword>
<keyword id="KW-0690">Ribosome biogenesis</keyword>